<feature type="signal peptide" evidence="1">
    <location>
        <begin position="1"/>
        <end position="20"/>
    </location>
</feature>
<feature type="chain" id="PRO_5000398374" description="Ecotin">
    <location>
        <begin position="21"/>
        <end position="164"/>
    </location>
</feature>
<feature type="site" description="Reactive bond" evidence="1">
    <location>
        <begin position="106"/>
        <end position="107"/>
    </location>
</feature>
<feature type="disulfide bond" evidence="1">
    <location>
        <begin position="72"/>
        <end position="109"/>
    </location>
</feature>
<organism>
    <name type="scientific">Salmonella gallinarum (strain 287/91 / NCTC 13346)</name>
    <dbReference type="NCBI Taxonomy" id="550538"/>
    <lineage>
        <taxon>Bacteria</taxon>
        <taxon>Pseudomonadati</taxon>
        <taxon>Pseudomonadota</taxon>
        <taxon>Gammaproteobacteria</taxon>
        <taxon>Enterobacterales</taxon>
        <taxon>Enterobacteriaceae</taxon>
        <taxon>Salmonella</taxon>
    </lineage>
</organism>
<proteinExistence type="inferred from homology"/>
<gene>
    <name evidence="1" type="primary">eco</name>
    <name type="ordered locus">SG2290</name>
</gene>
<accession>B5RC88</accession>
<dbReference type="EMBL" id="AM933173">
    <property type="protein sequence ID" value="CAR38122.1"/>
    <property type="molecule type" value="Genomic_DNA"/>
</dbReference>
<dbReference type="RefSeq" id="WP_000781589.1">
    <property type="nucleotide sequence ID" value="NC_011274.1"/>
</dbReference>
<dbReference type="SMR" id="B5RC88"/>
<dbReference type="MEROPS" id="I11.001"/>
<dbReference type="KEGG" id="seg:SG2290"/>
<dbReference type="HOGENOM" id="CLU_111565_0_0_6"/>
<dbReference type="Proteomes" id="UP000008321">
    <property type="component" value="Chromosome"/>
</dbReference>
<dbReference type="GO" id="GO:0042597">
    <property type="term" value="C:periplasmic space"/>
    <property type="evidence" value="ECO:0007669"/>
    <property type="project" value="UniProtKB-SubCell"/>
</dbReference>
<dbReference type="GO" id="GO:0004867">
    <property type="term" value="F:serine-type endopeptidase inhibitor activity"/>
    <property type="evidence" value="ECO:0007669"/>
    <property type="project" value="UniProtKB-UniRule"/>
</dbReference>
<dbReference type="CDD" id="cd00242">
    <property type="entry name" value="Ecotin"/>
    <property type="match status" value="1"/>
</dbReference>
<dbReference type="FunFam" id="2.60.40.550:FF:000001">
    <property type="entry name" value="Ecotin"/>
    <property type="match status" value="1"/>
</dbReference>
<dbReference type="FunFam" id="4.10.1230.10:FF:000001">
    <property type="entry name" value="Ecotin"/>
    <property type="match status" value="1"/>
</dbReference>
<dbReference type="Gene3D" id="2.60.40.550">
    <property type="entry name" value="Ecotin"/>
    <property type="match status" value="1"/>
</dbReference>
<dbReference type="Gene3D" id="4.10.1230.10">
    <property type="entry name" value="Ecotin, trypsin inhibitor"/>
    <property type="match status" value="1"/>
</dbReference>
<dbReference type="HAMAP" id="MF_00706">
    <property type="entry name" value="Ecotin"/>
    <property type="match status" value="1"/>
</dbReference>
<dbReference type="InterPro" id="IPR027438">
    <property type="entry name" value="Ecotin_C"/>
</dbReference>
<dbReference type="InterPro" id="IPR036198">
    <property type="entry name" value="Ecotin_sf"/>
</dbReference>
<dbReference type="InterPro" id="IPR005658">
    <property type="entry name" value="Prot_inh_ecotin"/>
</dbReference>
<dbReference type="InterPro" id="IPR023084">
    <property type="entry name" value="Prot_inh_ecotin_gammaproteobac"/>
</dbReference>
<dbReference type="NCBIfam" id="NF002987">
    <property type="entry name" value="PRK03719.1"/>
    <property type="match status" value="1"/>
</dbReference>
<dbReference type="PANTHER" id="PTHR35890">
    <property type="match status" value="1"/>
</dbReference>
<dbReference type="PANTHER" id="PTHR35890:SF3">
    <property type="entry name" value="ECOTIN"/>
    <property type="match status" value="1"/>
</dbReference>
<dbReference type="Pfam" id="PF03974">
    <property type="entry name" value="Ecotin"/>
    <property type="match status" value="1"/>
</dbReference>
<dbReference type="PIRSF" id="PIRSF006865">
    <property type="entry name" value="Prot_inh_ecotin"/>
    <property type="match status" value="1"/>
</dbReference>
<dbReference type="SUPFAM" id="SSF49772">
    <property type="entry name" value="Ecotin, trypsin inhibitor"/>
    <property type="match status" value="1"/>
</dbReference>
<evidence type="ECO:0000255" key="1">
    <source>
        <dbReference type="HAMAP-Rule" id="MF_00706"/>
    </source>
</evidence>
<name>ECOT_SALG2</name>
<keyword id="KW-1015">Disulfide bond</keyword>
<keyword id="KW-0574">Periplasm</keyword>
<keyword id="KW-0646">Protease inhibitor</keyword>
<keyword id="KW-0722">Serine protease inhibitor</keyword>
<keyword id="KW-0732">Signal</keyword>
<sequence>MKMFVPAVVFAALASASAWANNGDTAQPLEKIAPYPQAEKGMKRQVITLTPQQDESTLKVELLIGQTLNVDCNQHRLGGTLETKTLEGWGYDYYVFDNVTSPVSTMMACPEGKKEQKFVTAWLGEDGMLRYNSKLPIVVYTPANVDVKYRIWKADANVQNAVAR</sequence>
<protein>
    <recommendedName>
        <fullName evidence="1">Ecotin</fullName>
    </recommendedName>
</protein>
<reference key="1">
    <citation type="journal article" date="2008" name="Genome Res.">
        <title>Comparative genome analysis of Salmonella enteritidis PT4 and Salmonella gallinarum 287/91 provides insights into evolutionary and host adaptation pathways.</title>
        <authorList>
            <person name="Thomson N.R."/>
            <person name="Clayton D.J."/>
            <person name="Windhorst D."/>
            <person name="Vernikos G."/>
            <person name="Davidson S."/>
            <person name="Churcher C."/>
            <person name="Quail M.A."/>
            <person name="Stevens M."/>
            <person name="Jones M.A."/>
            <person name="Watson M."/>
            <person name="Barron A."/>
            <person name="Layton A."/>
            <person name="Pickard D."/>
            <person name="Kingsley R.A."/>
            <person name="Bignell A."/>
            <person name="Clark L."/>
            <person name="Harris B."/>
            <person name="Ormond D."/>
            <person name="Abdellah Z."/>
            <person name="Brooks K."/>
            <person name="Cherevach I."/>
            <person name="Chillingworth T."/>
            <person name="Woodward J."/>
            <person name="Norberczak H."/>
            <person name="Lord A."/>
            <person name="Arrowsmith C."/>
            <person name="Jagels K."/>
            <person name="Moule S."/>
            <person name="Mungall K."/>
            <person name="Saunders M."/>
            <person name="Whitehead S."/>
            <person name="Chabalgoity J.A."/>
            <person name="Maskell D."/>
            <person name="Humphreys T."/>
            <person name="Roberts M."/>
            <person name="Barrow P.A."/>
            <person name="Dougan G."/>
            <person name="Parkhill J."/>
        </authorList>
    </citation>
    <scope>NUCLEOTIDE SEQUENCE [LARGE SCALE GENOMIC DNA]</scope>
    <source>
        <strain>287/91 / NCTC 13346</strain>
    </source>
</reference>
<comment type="function">
    <text evidence="1">General inhibitor of pancreatic serine proteases: inhibits chymotrypsin, trypsin, elastases, factor X, kallikrein as well as a variety of other proteases.</text>
</comment>
<comment type="subunit">
    <text evidence="1">Homodimer.</text>
</comment>
<comment type="subcellular location">
    <subcellularLocation>
        <location evidence="1">Periplasm</location>
    </subcellularLocation>
</comment>
<comment type="similarity">
    <text evidence="1">Belongs to the protease inhibitor I11 (ecotin) family.</text>
</comment>